<evidence type="ECO:0000255" key="1">
    <source>
        <dbReference type="HAMAP-Rule" id="MF_00129"/>
    </source>
</evidence>
<feature type="chain" id="PRO_1000016649" description="tRNA uridine 5-carboxymethylaminomethyl modification enzyme MnmG">
    <location>
        <begin position="1"/>
        <end position="632"/>
    </location>
</feature>
<feature type="binding site" evidence="1">
    <location>
        <begin position="13"/>
        <end position="18"/>
    </location>
    <ligand>
        <name>FAD</name>
        <dbReference type="ChEBI" id="CHEBI:57692"/>
    </ligand>
</feature>
<feature type="binding site" evidence="1">
    <location>
        <begin position="275"/>
        <end position="289"/>
    </location>
    <ligand>
        <name>NAD(+)</name>
        <dbReference type="ChEBI" id="CHEBI:57540"/>
    </ligand>
</feature>
<dbReference type="EMBL" id="CP000094">
    <property type="protein sequence ID" value="ABA77474.1"/>
    <property type="molecule type" value="Genomic_DNA"/>
</dbReference>
<dbReference type="RefSeq" id="WP_011336722.1">
    <property type="nucleotide sequence ID" value="NC_007492.2"/>
</dbReference>
<dbReference type="SMR" id="Q3K430"/>
<dbReference type="KEGG" id="pfo:Pfl01_5741"/>
<dbReference type="eggNOG" id="COG0445">
    <property type="taxonomic scope" value="Bacteria"/>
</dbReference>
<dbReference type="HOGENOM" id="CLU_007831_2_2_6"/>
<dbReference type="Proteomes" id="UP000002704">
    <property type="component" value="Chromosome"/>
</dbReference>
<dbReference type="GO" id="GO:0005829">
    <property type="term" value="C:cytosol"/>
    <property type="evidence" value="ECO:0007669"/>
    <property type="project" value="TreeGrafter"/>
</dbReference>
<dbReference type="GO" id="GO:0050660">
    <property type="term" value="F:flavin adenine dinucleotide binding"/>
    <property type="evidence" value="ECO:0007669"/>
    <property type="project" value="UniProtKB-UniRule"/>
</dbReference>
<dbReference type="GO" id="GO:0030488">
    <property type="term" value="P:tRNA methylation"/>
    <property type="evidence" value="ECO:0007669"/>
    <property type="project" value="TreeGrafter"/>
</dbReference>
<dbReference type="GO" id="GO:0002098">
    <property type="term" value="P:tRNA wobble uridine modification"/>
    <property type="evidence" value="ECO:0007669"/>
    <property type="project" value="InterPro"/>
</dbReference>
<dbReference type="FunFam" id="1.10.10.1800:FF:000001">
    <property type="entry name" value="tRNA uridine 5-carboxymethylaminomethyl modification enzyme MnmG"/>
    <property type="match status" value="1"/>
</dbReference>
<dbReference type="FunFam" id="1.10.150.570:FF:000001">
    <property type="entry name" value="tRNA uridine 5-carboxymethylaminomethyl modification enzyme MnmG"/>
    <property type="match status" value="1"/>
</dbReference>
<dbReference type="FunFam" id="3.50.50.60:FF:000002">
    <property type="entry name" value="tRNA uridine 5-carboxymethylaminomethyl modification enzyme MnmG"/>
    <property type="match status" value="1"/>
</dbReference>
<dbReference type="FunFam" id="3.50.50.60:FF:000010">
    <property type="entry name" value="tRNA uridine 5-carboxymethylaminomethyl modification enzyme MnmG"/>
    <property type="match status" value="1"/>
</dbReference>
<dbReference type="Gene3D" id="3.50.50.60">
    <property type="entry name" value="FAD/NAD(P)-binding domain"/>
    <property type="match status" value="2"/>
</dbReference>
<dbReference type="Gene3D" id="1.10.150.570">
    <property type="entry name" value="GidA associated domain, C-terminal subdomain"/>
    <property type="match status" value="1"/>
</dbReference>
<dbReference type="Gene3D" id="1.10.10.1800">
    <property type="entry name" value="tRNA uridine 5-carboxymethylaminomethyl modification enzyme MnmG/GidA"/>
    <property type="match status" value="1"/>
</dbReference>
<dbReference type="HAMAP" id="MF_00129">
    <property type="entry name" value="MnmG_GidA"/>
    <property type="match status" value="1"/>
</dbReference>
<dbReference type="InterPro" id="IPR036188">
    <property type="entry name" value="FAD/NAD-bd_sf"/>
</dbReference>
<dbReference type="InterPro" id="IPR049312">
    <property type="entry name" value="GIDA_C_N"/>
</dbReference>
<dbReference type="InterPro" id="IPR004416">
    <property type="entry name" value="MnmG"/>
</dbReference>
<dbReference type="InterPro" id="IPR002218">
    <property type="entry name" value="MnmG-rel"/>
</dbReference>
<dbReference type="InterPro" id="IPR020595">
    <property type="entry name" value="MnmG-rel_CS"/>
</dbReference>
<dbReference type="InterPro" id="IPR026904">
    <property type="entry name" value="MnmG_C"/>
</dbReference>
<dbReference type="InterPro" id="IPR047001">
    <property type="entry name" value="MnmG_C_subdom"/>
</dbReference>
<dbReference type="InterPro" id="IPR044920">
    <property type="entry name" value="MnmG_C_subdom_sf"/>
</dbReference>
<dbReference type="InterPro" id="IPR040131">
    <property type="entry name" value="MnmG_N"/>
</dbReference>
<dbReference type="NCBIfam" id="TIGR00136">
    <property type="entry name" value="mnmG_gidA"/>
    <property type="match status" value="1"/>
</dbReference>
<dbReference type="PANTHER" id="PTHR11806">
    <property type="entry name" value="GLUCOSE INHIBITED DIVISION PROTEIN A"/>
    <property type="match status" value="1"/>
</dbReference>
<dbReference type="PANTHER" id="PTHR11806:SF0">
    <property type="entry name" value="PROTEIN MTO1 HOMOLOG, MITOCHONDRIAL"/>
    <property type="match status" value="1"/>
</dbReference>
<dbReference type="Pfam" id="PF01134">
    <property type="entry name" value="GIDA"/>
    <property type="match status" value="1"/>
</dbReference>
<dbReference type="Pfam" id="PF21680">
    <property type="entry name" value="GIDA_C_1st"/>
    <property type="match status" value="1"/>
</dbReference>
<dbReference type="Pfam" id="PF13932">
    <property type="entry name" value="SAM_GIDA_C"/>
    <property type="match status" value="1"/>
</dbReference>
<dbReference type="SMART" id="SM01228">
    <property type="entry name" value="GIDA_assoc_3"/>
    <property type="match status" value="1"/>
</dbReference>
<dbReference type="SUPFAM" id="SSF51905">
    <property type="entry name" value="FAD/NAD(P)-binding domain"/>
    <property type="match status" value="1"/>
</dbReference>
<dbReference type="PROSITE" id="PS01280">
    <property type="entry name" value="GIDA_1"/>
    <property type="match status" value="1"/>
</dbReference>
<dbReference type="PROSITE" id="PS01281">
    <property type="entry name" value="GIDA_2"/>
    <property type="match status" value="1"/>
</dbReference>
<proteinExistence type="inferred from homology"/>
<accession>Q3K430</accession>
<sequence length="632" mass="69306">MDFPSRFEVIVIGGGHAGTEAALASARMGAKTLLLTHNVETLGAMSCNPAIGGIGKSHLVKEIDALGGAMAMATDLGGIQFRVLNSRKGPAVRATRAQADRILYKAAVREILENQPNLWIFQQAADDLIVEQEQVRGVVTQMGLRFFADSVVLTTGTFLGGLIHIGLQNFSGGRAGDPPSIALAHRLRELPLRVGRLKTGTPPRIDGKSVDFSVMTEQPGDTPIPVMSFMGNKEQHPRQVSCWITHTNARTHEIIAANLDRSPMYSAAGEIEGIGPRYCPSIEDKIHRFADKESHQVFIEPEGLTTHELYPNGISTSLPFDVQLQIVQSIRGMENAHIVRPGYAIEYDYFDPRDLKYSLETKVIGGLFFAGQINGTTGYEEAGAQGLLAGANAALRAKGKEAWCPRRDEAYIGVLVDDLITLGTQEPYRMFTSRAEYRLILREDNADLRLTEKGRELGLVDDARWAAFCKKRESIELEEQRLKSTWVRPGTQQGDAIAEKFGTPLTHEYNLLNLLSRPEIDYAGLVEVTGLGAEDPQVAEQVEIKTKYAGYIDRQQDEIARLRASEDTKLPVDIDYTNISGLSKEIQSKLGATRPETLGQASRIPGVTPAAISLLMIHLKKRGAGRQLEQSA</sequence>
<reference key="1">
    <citation type="journal article" date="2009" name="Genome Biol.">
        <title>Genomic and genetic analyses of diversity and plant interactions of Pseudomonas fluorescens.</title>
        <authorList>
            <person name="Silby M.W."/>
            <person name="Cerdeno-Tarraga A.M."/>
            <person name="Vernikos G.S."/>
            <person name="Giddens S.R."/>
            <person name="Jackson R.W."/>
            <person name="Preston G.M."/>
            <person name="Zhang X.-X."/>
            <person name="Moon C.D."/>
            <person name="Gehrig S.M."/>
            <person name="Godfrey S.A.C."/>
            <person name="Knight C.G."/>
            <person name="Malone J.G."/>
            <person name="Robinson Z."/>
            <person name="Spiers A.J."/>
            <person name="Harris S."/>
            <person name="Challis G.L."/>
            <person name="Yaxley A.M."/>
            <person name="Harris D."/>
            <person name="Seeger K."/>
            <person name="Murphy L."/>
            <person name="Rutter S."/>
            <person name="Squares R."/>
            <person name="Quail M.A."/>
            <person name="Saunders E."/>
            <person name="Mavromatis K."/>
            <person name="Brettin T.S."/>
            <person name="Bentley S.D."/>
            <person name="Hothersall J."/>
            <person name="Stephens E."/>
            <person name="Thomas C.M."/>
            <person name="Parkhill J."/>
            <person name="Levy S.B."/>
            <person name="Rainey P.B."/>
            <person name="Thomson N.R."/>
        </authorList>
    </citation>
    <scope>NUCLEOTIDE SEQUENCE [LARGE SCALE GENOMIC DNA]</scope>
    <source>
        <strain>Pf0-1</strain>
    </source>
</reference>
<organism>
    <name type="scientific">Pseudomonas fluorescens (strain Pf0-1)</name>
    <dbReference type="NCBI Taxonomy" id="205922"/>
    <lineage>
        <taxon>Bacteria</taxon>
        <taxon>Pseudomonadati</taxon>
        <taxon>Pseudomonadota</taxon>
        <taxon>Gammaproteobacteria</taxon>
        <taxon>Pseudomonadales</taxon>
        <taxon>Pseudomonadaceae</taxon>
        <taxon>Pseudomonas</taxon>
    </lineage>
</organism>
<name>MNMG_PSEPF</name>
<gene>
    <name evidence="1" type="primary">mnmG</name>
    <name evidence="1" type="synonym">gidA</name>
    <name type="ordered locus">Pfl01_5741</name>
</gene>
<protein>
    <recommendedName>
        <fullName evidence="1">tRNA uridine 5-carboxymethylaminomethyl modification enzyme MnmG</fullName>
    </recommendedName>
    <alternativeName>
        <fullName evidence="1">Glucose-inhibited division protein A</fullName>
    </alternativeName>
</protein>
<keyword id="KW-0963">Cytoplasm</keyword>
<keyword id="KW-0274">FAD</keyword>
<keyword id="KW-0285">Flavoprotein</keyword>
<keyword id="KW-0520">NAD</keyword>
<keyword id="KW-0819">tRNA processing</keyword>
<comment type="function">
    <text evidence="1">NAD-binding protein involved in the addition of a carboxymethylaminomethyl (cmnm) group at the wobble position (U34) of certain tRNAs, forming tRNA-cmnm(5)s(2)U34.</text>
</comment>
<comment type="cofactor">
    <cofactor evidence="1">
        <name>FAD</name>
        <dbReference type="ChEBI" id="CHEBI:57692"/>
    </cofactor>
</comment>
<comment type="subunit">
    <text evidence="1">Homodimer. Heterotetramer of two MnmE and two MnmG subunits.</text>
</comment>
<comment type="subcellular location">
    <subcellularLocation>
        <location evidence="1">Cytoplasm</location>
    </subcellularLocation>
</comment>
<comment type="similarity">
    <text evidence="1">Belongs to the MnmG family.</text>
</comment>